<keyword id="KW-0217">Developmental protein</keyword>
<keyword id="KW-1015">Disulfide bond</keyword>
<keyword id="KW-0245">EGF-like domain</keyword>
<keyword id="KW-0306">Gastrulation</keyword>
<keyword id="KW-0325">Glycoprotein</keyword>
<keyword id="KW-1185">Reference proteome</keyword>
<keyword id="KW-0964">Secreted</keyword>
<keyword id="KW-0732">Signal</keyword>
<feature type="signal peptide" evidence="1">
    <location>
        <begin position="1"/>
        <end position="25"/>
    </location>
</feature>
<feature type="chain" id="PRO_0000395408" description="Cryptic family protein 1B">
    <location>
        <begin position="26"/>
        <end position="223"/>
    </location>
</feature>
<feature type="domain" description="EGF-like" evidence="2">
    <location>
        <begin position="86"/>
        <end position="115"/>
    </location>
</feature>
<feature type="glycosylation site" description="N-linked (GlcNAc...) asparagine" evidence="1">
    <location>
        <position position="52"/>
    </location>
</feature>
<feature type="disulfide bond" evidence="2">
    <location>
        <begin position="90"/>
        <end position="97"/>
    </location>
</feature>
<feature type="disulfide bond" evidence="2">
    <location>
        <begin position="91"/>
        <end position="103"/>
    </location>
</feature>
<feature type="disulfide bond" evidence="2">
    <location>
        <begin position="105"/>
        <end position="114"/>
    </location>
</feature>
<comment type="subcellular location">
    <subcellularLocation>
        <location evidence="3">Secreted</location>
    </subcellularLocation>
</comment>
<comment type="similarity">
    <text evidence="3">Belongs to the EGF-CFC (Cripto-1/FRL1/Cryptic) family.</text>
</comment>
<comment type="caution">
    <text evidence="3">This gene differs from CFC1 by only one residue at position 78:R -&gt; W. R78W is also thought to be a CFC1 polymorphism.</text>
</comment>
<evidence type="ECO:0000255" key="1"/>
<evidence type="ECO:0000255" key="2">
    <source>
        <dbReference type="PROSITE-ProRule" id="PRU00076"/>
    </source>
</evidence>
<evidence type="ECO:0000305" key="3"/>
<protein>
    <recommendedName>
        <fullName>Cryptic family protein 1B</fullName>
    </recommendedName>
</protein>
<gene>
    <name type="primary">CFC1B</name>
</gene>
<dbReference type="EMBL" id="AC013269">
    <property type="protein sequence ID" value="AAY14955.1"/>
    <property type="molecule type" value="Genomic_DNA"/>
</dbReference>
<dbReference type="CCDS" id="CCDS33286.1"/>
<dbReference type="RefSeq" id="NP_001072998.1">
    <property type="nucleotide sequence ID" value="NM_001079530.2"/>
</dbReference>
<dbReference type="SMR" id="P0CG36"/>
<dbReference type="FunCoup" id="P0CG36">
    <property type="interactions" value="3"/>
</dbReference>
<dbReference type="STRING" id="9606.ENSP00000281882"/>
<dbReference type="GlyCosmos" id="P0CG36">
    <property type="glycosylation" value="1 site, No reported glycans"/>
</dbReference>
<dbReference type="GlyGen" id="P0CG36">
    <property type="glycosylation" value="1 site"/>
</dbReference>
<dbReference type="BioMuta" id="CFC1B"/>
<dbReference type="DMDM" id="300680885"/>
<dbReference type="MassIVE" id="P0CG36"/>
<dbReference type="PaxDb" id="9606-ENSP00000281882"/>
<dbReference type="PeptideAtlas" id="P0CG36"/>
<dbReference type="ABCD" id="P0CG36">
    <property type="antibodies" value="8 sequenced antibodies"/>
</dbReference>
<dbReference type="Antibodypedia" id="68636">
    <property type="antibodies" value="49 antibodies from 15 providers"/>
</dbReference>
<dbReference type="DNASU" id="653275"/>
<dbReference type="Ensembl" id="ENST00000281882.8">
    <property type="protein sequence ID" value="ENSP00000281882.3"/>
    <property type="gene ID" value="ENSG00000152093.8"/>
</dbReference>
<dbReference type="GeneID" id="653275"/>
<dbReference type="KEGG" id="hsa:653275"/>
<dbReference type="MANE-Select" id="ENST00000281882.8">
    <property type="protein sequence ID" value="ENSP00000281882.3"/>
    <property type="RefSeq nucleotide sequence ID" value="NM_001079530.2"/>
    <property type="RefSeq protein sequence ID" value="NP_001072998.1"/>
</dbReference>
<dbReference type="UCSC" id="uc002trl.3">
    <property type="organism name" value="human"/>
</dbReference>
<dbReference type="AGR" id="HGNC:33983"/>
<dbReference type="CTD" id="653275"/>
<dbReference type="GeneCards" id="CFC1B"/>
<dbReference type="HGNC" id="HGNC:33983">
    <property type="gene designation" value="CFC1B"/>
</dbReference>
<dbReference type="HPA" id="ENSG00000152093">
    <property type="expression patterns" value="Tissue enhanced (brain, pituitary gland)"/>
</dbReference>
<dbReference type="neXtProt" id="NX_P0CG36"/>
<dbReference type="OpenTargets" id="ENSG00000152093"/>
<dbReference type="PharmGKB" id="PA162382207"/>
<dbReference type="VEuPathDB" id="HostDB:ENSG00000152093"/>
<dbReference type="eggNOG" id="KOG1217">
    <property type="taxonomic scope" value="Eukaryota"/>
</dbReference>
<dbReference type="GeneTree" id="ENSGT00940000162302"/>
<dbReference type="HOGENOM" id="CLU_092661_0_0_1"/>
<dbReference type="InParanoid" id="P0CG36"/>
<dbReference type="OMA" id="SRECSIP"/>
<dbReference type="OrthoDB" id="9893603at2759"/>
<dbReference type="PAN-GO" id="P0CG36">
    <property type="GO annotations" value="9 GO annotations based on evolutionary models"/>
</dbReference>
<dbReference type="PhylomeDB" id="P0CG36"/>
<dbReference type="TreeFam" id="TF333187"/>
<dbReference type="PathwayCommons" id="P0CG36"/>
<dbReference type="BioGRID-ORCS" id="653275">
    <property type="hits" value="20 hits in 1031 CRISPR screens"/>
</dbReference>
<dbReference type="GeneWiki" id="Cripto"/>
<dbReference type="GenomeRNAi" id="653275"/>
<dbReference type="Pharos" id="P0CG36">
    <property type="development level" value="Tdark"/>
</dbReference>
<dbReference type="PRO" id="PR:P0CG36"/>
<dbReference type="Proteomes" id="UP000005640">
    <property type="component" value="Chromosome 2"/>
</dbReference>
<dbReference type="RNAct" id="P0CG36">
    <property type="molecule type" value="protein"/>
</dbReference>
<dbReference type="Bgee" id="ENSG00000152093">
    <property type="expression patterns" value="Expressed in primordial germ cell in gonad and 39 other cell types or tissues"/>
</dbReference>
<dbReference type="ExpressionAtlas" id="P0CG36">
    <property type="expression patterns" value="baseline and differential"/>
</dbReference>
<dbReference type="GO" id="GO:0009986">
    <property type="term" value="C:cell surface"/>
    <property type="evidence" value="ECO:0000318"/>
    <property type="project" value="GO_Central"/>
</dbReference>
<dbReference type="GO" id="GO:0005576">
    <property type="term" value="C:extracellular region"/>
    <property type="evidence" value="ECO:0000318"/>
    <property type="project" value="GO_Central"/>
</dbReference>
<dbReference type="GO" id="GO:0070697">
    <property type="term" value="F:activin receptor binding"/>
    <property type="evidence" value="ECO:0000318"/>
    <property type="project" value="GO_Central"/>
</dbReference>
<dbReference type="GO" id="GO:0038100">
    <property type="term" value="F:nodal binding"/>
    <property type="evidence" value="ECO:0000318"/>
    <property type="project" value="GO_Central"/>
</dbReference>
<dbReference type="GO" id="GO:0009952">
    <property type="term" value="P:anterior/posterior pattern specification"/>
    <property type="evidence" value="ECO:0000318"/>
    <property type="project" value="GO_Central"/>
</dbReference>
<dbReference type="GO" id="GO:0001568">
    <property type="term" value="P:blood vessel development"/>
    <property type="evidence" value="ECO:0000318"/>
    <property type="project" value="GO_Central"/>
</dbReference>
<dbReference type="GO" id="GO:0007368">
    <property type="term" value="P:determination of left/right symmetry"/>
    <property type="evidence" value="ECO:0000318"/>
    <property type="project" value="GO_Central"/>
</dbReference>
<dbReference type="GO" id="GO:0007369">
    <property type="term" value="P:gastrulation"/>
    <property type="evidence" value="ECO:0007669"/>
    <property type="project" value="UniProtKB-KW"/>
</dbReference>
<dbReference type="GO" id="GO:0007507">
    <property type="term" value="P:heart development"/>
    <property type="evidence" value="ECO:0000318"/>
    <property type="project" value="GO_Central"/>
</dbReference>
<dbReference type="GO" id="GO:0038092">
    <property type="term" value="P:nodal signaling pathway"/>
    <property type="evidence" value="ECO:0000318"/>
    <property type="project" value="GO_Central"/>
</dbReference>
<dbReference type="CDD" id="cd00054">
    <property type="entry name" value="EGF_CA"/>
    <property type="match status" value="1"/>
</dbReference>
<dbReference type="FunFam" id="2.10.25.10:FF:000421">
    <property type="entry name" value="Teratocarcinoma-derived growth factor"/>
    <property type="match status" value="1"/>
</dbReference>
<dbReference type="Gene3D" id="2.10.25.10">
    <property type="entry name" value="Laminin"/>
    <property type="match status" value="1"/>
</dbReference>
<dbReference type="InterPro" id="IPR019011">
    <property type="entry name" value="Cryptic/Cripto_CFC-dom"/>
</dbReference>
<dbReference type="InterPro" id="IPR000742">
    <property type="entry name" value="EGF-like_dom"/>
</dbReference>
<dbReference type="Pfam" id="PF09443">
    <property type="entry name" value="CFC"/>
    <property type="match status" value="1"/>
</dbReference>
<dbReference type="SUPFAM" id="SSF57196">
    <property type="entry name" value="EGF/Laminin"/>
    <property type="match status" value="2"/>
</dbReference>
<dbReference type="PROSITE" id="PS00022">
    <property type="entry name" value="EGF_1"/>
    <property type="match status" value="1"/>
</dbReference>
<dbReference type="PROSITE" id="PS50026">
    <property type="entry name" value="EGF_3"/>
    <property type="match status" value="1"/>
</dbReference>
<sequence length="223" mass="24642">MTWRHHVRLLFTVSLALQIINLGNSYQREKHNGGREEVTKVATQKHRQSPLNWTSSHFGEVTGSAEGWGPEEPLPYSWAFGEGASARPRCCRNGGTCVLGSFCVCPAHFTGRYCEHDQRRSECGALEHGAWTLRACHLCRCIFGALHCLPLQTPDRCDPKDFLASHAHGPSAGGAPSLLLLLPCALLHRLLRPDAPAHPRSLVPSVLQRERRPCGRPGLGHRL</sequence>
<reference key="1">
    <citation type="journal article" date="2005" name="Nature">
        <title>Generation and annotation of the DNA sequences of human chromosomes 2 and 4.</title>
        <authorList>
            <person name="Hillier L.W."/>
            <person name="Graves T.A."/>
            <person name="Fulton R.S."/>
            <person name="Fulton L.A."/>
            <person name="Pepin K.H."/>
            <person name="Minx P."/>
            <person name="Wagner-McPherson C."/>
            <person name="Layman D."/>
            <person name="Wylie K."/>
            <person name="Sekhon M."/>
            <person name="Becker M.C."/>
            <person name="Fewell G.A."/>
            <person name="Delehaunty K.D."/>
            <person name="Miner T.L."/>
            <person name="Nash W.E."/>
            <person name="Kremitzki C."/>
            <person name="Oddy L."/>
            <person name="Du H."/>
            <person name="Sun H."/>
            <person name="Bradshaw-Cordum H."/>
            <person name="Ali J."/>
            <person name="Carter J."/>
            <person name="Cordes M."/>
            <person name="Harris A."/>
            <person name="Isak A."/>
            <person name="van Brunt A."/>
            <person name="Nguyen C."/>
            <person name="Du F."/>
            <person name="Courtney L."/>
            <person name="Kalicki J."/>
            <person name="Ozersky P."/>
            <person name="Abbott S."/>
            <person name="Armstrong J."/>
            <person name="Belter E.A."/>
            <person name="Caruso L."/>
            <person name="Cedroni M."/>
            <person name="Cotton M."/>
            <person name="Davidson T."/>
            <person name="Desai A."/>
            <person name="Elliott G."/>
            <person name="Erb T."/>
            <person name="Fronick C."/>
            <person name="Gaige T."/>
            <person name="Haakenson W."/>
            <person name="Haglund K."/>
            <person name="Holmes A."/>
            <person name="Harkins R."/>
            <person name="Kim K."/>
            <person name="Kruchowski S.S."/>
            <person name="Strong C.M."/>
            <person name="Grewal N."/>
            <person name="Goyea E."/>
            <person name="Hou S."/>
            <person name="Levy A."/>
            <person name="Martinka S."/>
            <person name="Mead K."/>
            <person name="McLellan M.D."/>
            <person name="Meyer R."/>
            <person name="Randall-Maher J."/>
            <person name="Tomlinson C."/>
            <person name="Dauphin-Kohlberg S."/>
            <person name="Kozlowicz-Reilly A."/>
            <person name="Shah N."/>
            <person name="Swearengen-Shahid S."/>
            <person name="Snider J."/>
            <person name="Strong J.T."/>
            <person name="Thompson J."/>
            <person name="Yoakum M."/>
            <person name="Leonard S."/>
            <person name="Pearman C."/>
            <person name="Trani L."/>
            <person name="Radionenko M."/>
            <person name="Waligorski J.E."/>
            <person name="Wang C."/>
            <person name="Rock S.M."/>
            <person name="Tin-Wollam A.-M."/>
            <person name="Maupin R."/>
            <person name="Latreille P."/>
            <person name="Wendl M.C."/>
            <person name="Yang S.-P."/>
            <person name="Pohl C."/>
            <person name="Wallis J.W."/>
            <person name="Spieth J."/>
            <person name="Bieri T.A."/>
            <person name="Berkowicz N."/>
            <person name="Nelson J.O."/>
            <person name="Osborne J."/>
            <person name="Ding L."/>
            <person name="Meyer R."/>
            <person name="Sabo A."/>
            <person name="Shotland Y."/>
            <person name="Sinha P."/>
            <person name="Wohldmann P.E."/>
            <person name="Cook L.L."/>
            <person name="Hickenbotham M.T."/>
            <person name="Eldred J."/>
            <person name="Williams D."/>
            <person name="Jones T.A."/>
            <person name="She X."/>
            <person name="Ciccarelli F.D."/>
            <person name="Izaurralde E."/>
            <person name="Taylor J."/>
            <person name="Schmutz J."/>
            <person name="Myers R.M."/>
            <person name="Cox D.R."/>
            <person name="Huang X."/>
            <person name="McPherson J.D."/>
            <person name="Mardis E.R."/>
            <person name="Clifton S.W."/>
            <person name="Warren W.C."/>
            <person name="Chinwalla A.T."/>
            <person name="Eddy S.R."/>
            <person name="Marra M.A."/>
            <person name="Ovcharenko I."/>
            <person name="Furey T.S."/>
            <person name="Miller W."/>
            <person name="Eichler E.E."/>
            <person name="Bork P."/>
            <person name="Suyama M."/>
            <person name="Torrents D."/>
            <person name="Waterston R.H."/>
            <person name="Wilson R.K."/>
        </authorList>
    </citation>
    <scope>NUCLEOTIDE SEQUENCE [LARGE SCALE GENOMIC DNA]</scope>
</reference>
<name>CFC1B_HUMAN</name>
<accession>P0CG36</accession>
<accession>B2RCY0</accession>
<accession>B9EJD3</accession>
<accession>Q53T05</accession>
<accession>Q9GZR3</accession>
<organism>
    <name type="scientific">Homo sapiens</name>
    <name type="common">Human</name>
    <dbReference type="NCBI Taxonomy" id="9606"/>
    <lineage>
        <taxon>Eukaryota</taxon>
        <taxon>Metazoa</taxon>
        <taxon>Chordata</taxon>
        <taxon>Craniata</taxon>
        <taxon>Vertebrata</taxon>
        <taxon>Euteleostomi</taxon>
        <taxon>Mammalia</taxon>
        <taxon>Eutheria</taxon>
        <taxon>Euarchontoglires</taxon>
        <taxon>Primates</taxon>
        <taxon>Haplorrhini</taxon>
        <taxon>Catarrhini</taxon>
        <taxon>Hominidae</taxon>
        <taxon>Homo</taxon>
    </lineage>
</organism>
<proteinExistence type="inferred from homology"/>